<dbReference type="EMBL" id="M86238">
    <property type="status" value="NOT_ANNOTATED_CDS"/>
    <property type="molecule type" value="Genomic_DNA"/>
</dbReference>
<dbReference type="EMBL" id="CP000951">
    <property type="protein sequence ID" value="ACA99579.1"/>
    <property type="molecule type" value="Genomic_DNA"/>
</dbReference>
<dbReference type="RefSeq" id="WP_012307202.1">
    <property type="nucleotide sequence ID" value="NZ_JAHHPU010000002.1"/>
</dbReference>
<dbReference type="SMR" id="P31526"/>
<dbReference type="STRING" id="32049.SYNPCC7002_A1588"/>
<dbReference type="KEGG" id="syp:SYNPCC7002_A1588"/>
<dbReference type="eggNOG" id="COG3063">
    <property type="taxonomic scope" value="Bacteria"/>
</dbReference>
<dbReference type="HOGENOM" id="CLU_100519_0_0_3"/>
<dbReference type="Proteomes" id="UP000001688">
    <property type="component" value="Chromosome"/>
</dbReference>
<dbReference type="InterPro" id="IPR037257">
    <property type="entry name" value="T2SS_E_N_sf"/>
</dbReference>
<dbReference type="SUPFAM" id="SSF160246">
    <property type="entry name" value="EspE N-terminal domain-like"/>
    <property type="match status" value="1"/>
</dbReference>
<organism>
    <name type="scientific">Picosynechococcus sp. (strain ATCC 27264 / PCC 7002 / PR-6)</name>
    <name type="common">Agmenellum quadruplicatum</name>
    <dbReference type="NCBI Taxonomy" id="32049"/>
    <lineage>
        <taxon>Bacteria</taxon>
        <taxon>Bacillati</taxon>
        <taxon>Cyanobacteriota</taxon>
        <taxon>Cyanophyceae</taxon>
        <taxon>Oscillatoriophycideae</taxon>
        <taxon>Chroococcales</taxon>
        <taxon>Geminocystaceae</taxon>
        <taxon>Picosynechococcus</taxon>
    </lineage>
</organism>
<feature type="chain" id="PRO_0000066415" description="Uncharacterized protein SYNPCC7002_A1588">
    <location>
        <begin position="1"/>
        <end position="184"/>
    </location>
</feature>
<feature type="region of interest" description="Disordered" evidence="1">
    <location>
        <begin position="146"/>
        <end position="177"/>
    </location>
</feature>
<feature type="compositionally biased region" description="Polar residues" evidence="1">
    <location>
        <begin position="150"/>
        <end position="172"/>
    </location>
</feature>
<reference key="1">
    <citation type="journal article" date="1992" name="Gene">
        <title>The psaC genes of Synechococcus sp. PCC7002 and Cyanophora paradoxa: cloning and sequence analysis.</title>
        <authorList>
            <person name="Rhiel E."/>
            <person name="Stirewalt V.L."/>
            <person name="Gasparich G.E."/>
            <person name="Bryant D.A."/>
        </authorList>
    </citation>
    <scope>NUCLEOTIDE SEQUENCE [GENOMIC DNA]</scope>
</reference>
<reference key="2">
    <citation type="submission" date="2008-02" db="EMBL/GenBank/DDBJ databases">
        <title>Complete sequence of Synechococcus sp. PCC 7002.</title>
        <authorList>
            <person name="Li T."/>
            <person name="Zhao J."/>
            <person name="Zhao C."/>
            <person name="Liu Z."/>
            <person name="Zhao F."/>
            <person name="Marquardt J."/>
            <person name="Nomura C.T."/>
            <person name="Persson S."/>
            <person name="Detter J.C."/>
            <person name="Richardson P.M."/>
            <person name="Lanz C."/>
            <person name="Schuster S.C."/>
            <person name="Wang J."/>
            <person name="Li S."/>
            <person name="Huang X."/>
            <person name="Cai T."/>
            <person name="Yu Z."/>
            <person name="Luo J."/>
            <person name="Zhao J."/>
            <person name="Bryant D.A."/>
        </authorList>
    </citation>
    <scope>NUCLEOTIDE SEQUENCE [LARGE SCALE GENOMIC DNA]</scope>
    <source>
        <strain>ATCC 27264 / PCC 7002 / PR-6</strain>
    </source>
</reference>
<protein>
    <recommendedName>
        <fullName>Uncharacterized protein SYNPCC7002_A1588</fullName>
    </recommendedName>
</protein>
<name>Y1588_PICP2</name>
<evidence type="ECO:0000256" key="1">
    <source>
        <dbReference type="SAM" id="MobiDB-lite"/>
    </source>
</evidence>
<sequence length="184" mass="20874">MNAASTNNGPKIQLIGEVLEDAGLISEAQLQTALFDQQIYSDLKFGEILTLRGWIRQPTADFFAKYAKQELILIDSKRLGDYLLEADLLTTEQLALILDEQRLNHMLFGSLAVLKGYIPQKTLNFFLRRILNQHVGDRRFWQTTHHPKTSLAQQPNAKATQPPLSKETLNTAKETDPTEINWIG</sequence>
<keyword id="KW-1185">Reference proteome</keyword>
<proteinExistence type="predicted"/>
<accession>P31526</accession>
<accession>B1XNQ4</accession>
<gene>
    <name type="ordered locus">SYNPCC7002_A1588</name>
</gene>